<sequence>MLMWPQPHLPTHPHLPTHPHLPTHPHLPTHPHLPTHPMMSKETRQSKLAEAKEQLTDHHPQTNPSVGTAASDTKKKKINNGTNPETTTSGGCHSPEDEQKASHQHQEALRRELEAQVHTIRILTCQKTELQMALYYSQHAVKQLEGEARDLISRLHDSWKFAGELEQALSAVATQKKKADRYIEELTKERDALSLELYRNTITDEELKEKNAELQEKLQLVESEKSEIQLNVKELKRKLERAKLLLPQQQLQAEADHLGKELQSVSAKLQAQVEENELWNRLNQQQEEKMWRQEEKIQEWEEKIQEQEEKIREQEEKIREQEEKMRRQEEMMWEKEEKMRRQEEMMWEKEEKMRRQEEMMWEKEEKIRELEEKMHEQEKIREQEEKRQEEEKIREQEKRQEQEAKMWRQEEKIREQEEKIREQEKKMWRQEEKIHEQEKIREEEKRQEQEEMWRQEEKIREQEEIWRQKEKMHEQEEKIRKQEEKVWRQEEKIREQEEKIREQEEKMWRQEEKIREQEEMWREEEKMHEQEKIWEEEKRQEQEDKMWRQEEKIREQEEKVWRQEEKIREQEEKRQEQEEKMWKQEEKIREQEEKIREQEEKIREQEEKIREQEEMTQEQEEKMGEQEEKMCEQEEKMQEQEETMWRQEEKIREQEKKIREQEEKIREQEEMMQEQEEKMWEQEEKMCEQEEKMQEQEEKMRRQEEKMWEQEVRLRQQEEKMQEH</sequence>
<dbReference type="EMBL" id="AC023310">
    <property type="status" value="NOT_ANNOTATED_CDS"/>
    <property type="molecule type" value="Genomic_DNA"/>
</dbReference>
<dbReference type="CCDS" id="CCDS45184.1"/>
<dbReference type="RefSeq" id="NP_001138476.2">
    <property type="nucleotide sequence ID" value="NM_001145004.2"/>
</dbReference>
<dbReference type="SMR" id="A8MZA4"/>
<dbReference type="IntAct" id="A8MZA4">
    <property type="interactions" value="1"/>
</dbReference>
<dbReference type="STRING" id="9606.ENSP00000480376"/>
<dbReference type="GlyGen" id="A8MZA4">
    <property type="glycosylation" value="1 site, 1 O-linked glycan (1 site)"/>
</dbReference>
<dbReference type="iPTMnet" id="A8MZA4"/>
<dbReference type="PhosphoSitePlus" id="A8MZA4"/>
<dbReference type="BioMuta" id="GOLGA6L6"/>
<dbReference type="MassIVE" id="A8MZA4"/>
<dbReference type="PaxDb" id="9606-ENSP00000480376"/>
<dbReference type="PeptideAtlas" id="A8MZA4"/>
<dbReference type="ProteomicsDB" id="2465"/>
<dbReference type="Antibodypedia" id="78143">
    <property type="antibodies" value="3 antibodies from 3 providers"/>
</dbReference>
<dbReference type="Ensembl" id="ENST00000619213.1">
    <property type="protein sequence ID" value="ENSP00000480376.1"/>
    <property type="gene ID" value="ENSG00000277322.1"/>
</dbReference>
<dbReference type="GeneID" id="727832"/>
<dbReference type="KEGG" id="hsa:727832"/>
<dbReference type="MANE-Select" id="ENST00000619213.1">
    <property type="protein sequence ID" value="ENSP00000480376.1"/>
    <property type="RefSeq nucleotide sequence ID" value="NM_001145004.2"/>
    <property type="RefSeq protein sequence ID" value="NP_001138476.2"/>
</dbReference>
<dbReference type="AGR" id="HGNC:37225"/>
<dbReference type="CTD" id="727832"/>
<dbReference type="GeneCards" id="GOLGA6L6"/>
<dbReference type="HGNC" id="HGNC:37225">
    <property type="gene designation" value="GOLGA6L6"/>
</dbReference>
<dbReference type="HPA" id="ENSG00000277322">
    <property type="expression patterns" value="Tissue enriched (testis)"/>
</dbReference>
<dbReference type="neXtProt" id="NX_A8MZA4"/>
<dbReference type="OpenTargets" id="ENSG00000277322"/>
<dbReference type="VEuPathDB" id="HostDB:ENSG00000277322"/>
<dbReference type="eggNOG" id="KOG4725">
    <property type="taxonomic scope" value="Eukaryota"/>
</dbReference>
<dbReference type="GeneTree" id="ENSGT00940000163338"/>
<dbReference type="InParanoid" id="A8MZA4"/>
<dbReference type="OMA" id="NEWWEER"/>
<dbReference type="OrthoDB" id="9540182at2759"/>
<dbReference type="PAN-GO" id="A8MZA4">
    <property type="GO annotations" value="0 GO annotations based on evolutionary models"/>
</dbReference>
<dbReference type="TreeFam" id="TF316990"/>
<dbReference type="PathwayCommons" id="A8MZA4"/>
<dbReference type="BioGRID-ORCS" id="727832">
    <property type="hits" value="156 hits in 657 CRISPR screens"/>
</dbReference>
<dbReference type="GenomeRNAi" id="727832"/>
<dbReference type="Pharos" id="A8MZA4">
    <property type="development level" value="Tdark"/>
</dbReference>
<dbReference type="PRO" id="PR:A8MZA4"/>
<dbReference type="Proteomes" id="UP000005640">
    <property type="component" value="Chromosome 15"/>
</dbReference>
<dbReference type="RNAct" id="A8MZA4">
    <property type="molecule type" value="protein"/>
</dbReference>
<dbReference type="Bgee" id="ENSG00000277322">
    <property type="expression patterns" value="Expressed in left testis and 3 other cell types or tissues"/>
</dbReference>
<dbReference type="InterPro" id="IPR026737">
    <property type="entry name" value="GOLGA6L"/>
</dbReference>
<dbReference type="PANTHER" id="PTHR23143:SF31">
    <property type="entry name" value="GOLGIN SUBFAMILY A MEMBER 6-LIKE PROTEIN 1-RELATED"/>
    <property type="match status" value="1"/>
</dbReference>
<dbReference type="PANTHER" id="PTHR23143">
    <property type="entry name" value="TRICHOHYALIN-RELATED"/>
    <property type="match status" value="1"/>
</dbReference>
<feature type="chain" id="PRO_0000332267" description="Golgin subfamily A member 6-like protein 6">
    <location>
        <begin position="1"/>
        <end position="724"/>
    </location>
</feature>
<feature type="region of interest" description="Disordered" evidence="2">
    <location>
        <begin position="1"/>
        <end position="108"/>
    </location>
</feature>
<feature type="region of interest" description="Disordered" evidence="2">
    <location>
        <begin position="314"/>
        <end position="342"/>
    </location>
</feature>
<feature type="region of interest" description="Disordered" evidence="2">
    <location>
        <begin position="374"/>
        <end position="454"/>
    </location>
</feature>
<feature type="region of interest" description="Disordered" evidence="2">
    <location>
        <begin position="517"/>
        <end position="548"/>
    </location>
</feature>
<feature type="region of interest" description="Disordered" evidence="2">
    <location>
        <begin position="561"/>
        <end position="724"/>
    </location>
</feature>
<feature type="coiled-coil region" evidence="1">
    <location>
        <begin position="164"/>
        <end position="686"/>
    </location>
</feature>
<feature type="compositionally biased region" description="Basic residues" evidence="2">
    <location>
        <begin position="15"/>
        <end position="29"/>
    </location>
</feature>
<feature type="compositionally biased region" description="Basic and acidic residues" evidence="2">
    <location>
        <begin position="39"/>
        <end position="60"/>
    </location>
</feature>
<feature type="compositionally biased region" description="Polar residues" evidence="2">
    <location>
        <begin position="61"/>
        <end position="71"/>
    </location>
</feature>
<feature type="compositionally biased region" description="Polar residues" evidence="2">
    <location>
        <begin position="79"/>
        <end position="91"/>
    </location>
</feature>
<feature type="compositionally biased region" description="Basic and acidic residues" evidence="2">
    <location>
        <begin position="94"/>
        <end position="108"/>
    </location>
</feature>
<protein>
    <recommendedName>
        <fullName>Golgin subfamily A member 6-like protein 6</fullName>
    </recommendedName>
</protein>
<comment type="similarity">
    <text evidence="3">Belongs to the GOLGA6 family.</text>
</comment>
<gene>
    <name type="primary">GOLGA6L6</name>
</gene>
<keyword id="KW-0175">Coiled coil</keyword>
<keyword id="KW-1185">Reference proteome</keyword>
<name>GG6L6_HUMAN</name>
<proteinExistence type="inferred from homology"/>
<accession>A8MZA4</accession>
<accession>D3YTC0</accession>
<evidence type="ECO:0000255" key="1"/>
<evidence type="ECO:0000256" key="2">
    <source>
        <dbReference type="SAM" id="MobiDB-lite"/>
    </source>
</evidence>
<evidence type="ECO:0000305" key="3"/>
<organism>
    <name type="scientific">Homo sapiens</name>
    <name type="common">Human</name>
    <dbReference type="NCBI Taxonomy" id="9606"/>
    <lineage>
        <taxon>Eukaryota</taxon>
        <taxon>Metazoa</taxon>
        <taxon>Chordata</taxon>
        <taxon>Craniata</taxon>
        <taxon>Vertebrata</taxon>
        <taxon>Euteleostomi</taxon>
        <taxon>Mammalia</taxon>
        <taxon>Eutheria</taxon>
        <taxon>Euarchontoglires</taxon>
        <taxon>Primates</taxon>
        <taxon>Haplorrhini</taxon>
        <taxon>Catarrhini</taxon>
        <taxon>Hominidae</taxon>
        <taxon>Homo</taxon>
    </lineage>
</organism>
<reference key="1">
    <citation type="journal article" date="2006" name="Nature">
        <title>Analysis of the DNA sequence and duplication history of human chromosome 15.</title>
        <authorList>
            <person name="Zody M.C."/>
            <person name="Garber M."/>
            <person name="Sharpe T."/>
            <person name="Young S.K."/>
            <person name="Rowen L."/>
            <person name="O'Neill K."/>
            <person name="Whittaker C.A."/>
            <person name="Kamal M."/>
            <person name="Chang J.L."/>
            <person name="Cuomo C.A."/>
            <person name="Dewar K."/>
            <person name="FitzGerald M.G."/>
            <person name="Kodira C.D."/>
            <person name="Madan A."/>
            <person name="Qin S."/>
            <person name="Yang X."/>
            <person name="Abbasi N."/>
            <person name="Abouelleil A."/>
            <person name="Arachchi H.M."/>
            <person name="Baradarani L."/>
            <person name="Birditt B."/>
            <person name="Bloom S."/>
            <person name="Bloom T."/>
            <person name="Borowsky M.L."/>
            <person name="Burke J."/>
            <person name="Butler J."/>
            <person name="Cook A."/>
            <person name="DeArellano K."/>
            <person name="DeCaprio D."/>
            <person name="Dorris L. III"/>
            <person name="Dors M."/>
            <person name="Eichler E.E."/>
            <person name="Engels R."/>
            <person name="Fahey J."/>
            <person name="Fleetwood P."/>
            <person name="Friedman C."/>
            <person name="Gearin G."/>
            <person name="Hall J.L."/>
            <person name="Hensley G."/>
            <person name="Johnson E."/>
            <person name="Jones C."/>
            <person name="Kamat A."/>
            <person name="Kaur A."/>
            <person name="Locke D.P."/>
            <person name="Madan A."/>
            <person name="Munson G."/>
            <person name="Jaffe D.B."/>
            <person name="Lui A."/>
            <person name="Macdonald P."/>
            <person name="Mauceli E."/>
            <person name="Naylor J.W."/>
            <person name="Nesbitt R."/>
            <person name="Nicol R."/>
            <person name="O'Leary S.B."/>
            <person name="Ratcliffe A."/>
            <person name="Rounsley S."/>
            <person name="She X."/>
            <person name="Sneddon K.M.B."/>
            <person name="Stewart S."/>
            <person name="Sougnez C."/>
            <person name="Stone S.M."/>
            <person name="Topham K."/>
            <person name="Vincent D."/>
            <person name="Wang S."/>
            <person name="Zimmer A.R."/>
            <person name="Birren B.W."/>
            <person name="Hood L."/>
            <person name="Lander E.S."/>
            <person name="Nusbaum C."/>
        </authorList>
    </citation>
    <scope>NUCLEOTIDE SEQUENCE [LARGE SCALE GENOMIC DNA]</scope>
</reference>